<organism>
    <name type="scientific">Tropheryma whipplei (strain TW08/27)</name>
    <name type="common">Whipple's bacillus</name>
    <dbReference type="NCBI Taxonomy" id="218496"/>
    <lineage>
        <taxon>Bacteria</taxon>
        <taxon>Bacillati</taxon>
        <taxon>Actinomycetota</taxon>
        <taxon>Actinomycetes</taxon>
        <taxon>Micrococcales</taxon>
        <taxon>Tropherymataceae</taxon>
        <taxon>Tropheryma</taxon>
    </lineage>
</organism>
<feature type="chain" id="PRO_0000152110" description="Leucine--tRNA ligase">
    <location>
        <begin position="1"/>
        <end position="806"/>
    </location>
</feature>
<feature type="short sequence motif" description="'HIGH' region">
    <location>
        <begin position="54"/>
        <end position="64"/>
    </location>
</feature>
<feature type="short sequence motif" description="'KMSKS' region">
    <location>
        <begin position="571"/>
        <end position="575"/>
    </location>
</feature>
<feature type="binding site" evidence="1">
    <location>
        <position position="574"/>
    </location>
    <ligand>
        <name>ATP</name>
        <dbReference type="ChEBI" id="CHEBI:30616"/>
    </ligand>
</feature>
<comment type="catalytic activity">
    <reaction evidence="1">
        <text>tRNA(Leu) + L-leucine + ATP = L-leucyl-tRNA(Leu) + AMP + diphosphate</text>
        <dbReference type="Rhea" id="RHEA:11688"/>
        <dbReference type="Rhea" id="RHEA-COMP:9613"/>
        <dbReference type="Rhea" id="RHEA-COMP:9622"/>
        <dbReference type="ChEBI" id="CHEBI:30616"/>
        <dbReference type="ChEBI" id="CHEBI:33019"/>
        <dbReference type="ChEBI" id="CHEBI:57427"/>
        <dbReference type="ChEBI" id="CHEBI:78442"/>
        <dbReference type="ChEBI" id="CHEBI:78494"/>
        <dbReference type="ChEBI" id="CHEBI:456215"/>
        <dbReference type="EC" id="6.1.1.4"/>
    </reaction>
</comment>
<comment type="subcellular location">
    <subcellularLocation>
        <location evidence="1">Cytoplasm</location>
    </subcellularLocation>
</comment>
<comment type="similarity">
    <text evidence="1">Belongs to the class-I aminoacyl-tRNA synthetase family.</text>
</comment>
<accession>Q83HV5</accession>
<sequence>MHALRALDTLCENMEYNFRALEEKWAPIWERDRLFEVDENDSETPRKYVLDMFSYPSGDLHMGHAETYAYGDFIARYWRHRGYNVLHPVGWDSFGLPAENAAIKHGSDPKVWTYRNIDQQARSMRLYAASFDWSRRLHTSDPEYYRWNQWLFLKLYKHGLAYRKKAWVNWDPSDRTVLANEQVLPDGTSERSGALVVKKKLTQWFLRITAYADRLLDDLSMLENNWPERVITMQRNWIGRSEGVSIEFNIPTLKRPVMVFTTRPETIFGVTYLALAFDSEVTEELASKSGVLGELLELRHNIDKTHESVRGLDLKSFAIHPLTGQSIPIFAASYILSDYAKGAVMSVPGHDTRDERFAVRYNLPIVKIMEDNRLISSGKYSGQSVTQARENITRDLCAKSLGRREISYRLRDWLISRQRYWGTPIPILYDSNGSEIPVEEDDLPVLLPDSEGIDLTPSGLSPLGGIHDWVNLHKAGSLFRRDTDTMDTFFDSSWYFLRYLNPDCDTAPFTLEKAKKWGPVDQYCGGVEHAVLHLLYARFITKFLYDIGFVDFKEPFLRLINQGMVVLNGAKMSKSKGNIVEFSKEVSQHGVDVIRFALIFSGPPEEDIDWKDVSMTGAARFLSRCIQTAKEVPKRTADLSLGDIELRKHTHSLLNDIDWLVDSYRFNVIAARLMDLLNITRKKIQTIGADNPAIREAIETIAIALDMFSPYTAEEMWEILGNKYSVSKALFPEVDTTFLEQKTTCAIVQIDGRLRGRLNVLTNITTEQLVHSARSLPAIEHALSGRSVKRVICVPPKLVNFVVEPK</sequence>
<evidence type="ECO:0000255" key="1">
    <source>
        <dbReference type="HAMAP-Rule" id="MF_00049"/>
    </source>
</evidence>
<protein>
    <recommendedName>
        <fullName evidence="1">Leucine--tRNA ligase</fullName>
        <ecNumber evidence="1">6.1.1.4</ecNumber>
    </recommendedName>
    <alternativeName>
        <fullName evidence="1">Leucyl-tRNA synthetase</fullName>
        <shortName evidence="1">LeuRS</shortName>
    </alternativeName>
</protein>
<keyword id="KW-0030">Aminoacyl-tRNA synthetase</keyword>
<keyword id="KW-0067">ATP-binding</keyword>
<keyword id="KW-0963">Cytoplasm</keyword>
<keyword id="KW-0436">Ligase</keyword>
<keyword id="KW-0547">Nucleotide-binding</keyword>
<keyword id="KW-0648">Protein biosynthesis</keyword>
<name>SYL_TROW8</name>
<proteinExistence type="inferred from homology"/>
<dbReference type="EC" id="6.1.1.4" evidence="1"/>
<dbReference type="EMBL" id="BX251411">
    <property type="protein sequence ID" value="CAD67056.1"/>
    <property type="molecule type" value="Genomic_DNA"/>
</dbReference>
<dbReference type="RefSeq" id="WP_011096336.1">
    <property type="nucleotide sequence ID" value="NC_004551.1"/>
</dbReference>
<dbReference type="SMR" id="Q83HV5"/>
<dbReference type="GeneID" id="67388163"/>
<dbReference type="KEGG" id="tws:TW385"/>
<dbReference type="HOGENOM" id="CLU_004427_0_0_11"/>
<dbReference type="GO" id="GO:0005737">
    <property type="term" value="C:cytoplasm"/>
    <property type="evidence" value="ECO:0007669"/>
    <property type="project" value="UniProtKB-SubCell"/>
</dbReference>
<dbReference type="GO" id="GO:0002161">
    <property type="term" value="F:aminoacyl-tRNA deacylase activity"/>
    <property type="evidence" value="ECO:0007669"/>
    <property type="project" value="InterPro"/>
</dbReference>
<dbReference type="GO" id="GO:0005524">
    <property type="term" value="F:ATP binding"/>
    <property type="evidence" value="ECO:0007669"/>
    <property type="project" value="UniProtKB-UniRule"/>
</dbReference>
<dbReference type="GO" id="GO:0004823">
    <property type="term" value="F:leucine-tRNA ligase activity"/>
    <property type="evidence" value="ECO:0007669"/>
    <property type="project" value="UniProtKB-UniRule"/>
</dbReference>
<dbReference type="GO" id="GO:0006429">
    <property type="term" value="P:leucyl-tRNA aminoacylation"/>
    <property type="evidence" value="ECO:0007669"/>
    <property type="project" value="UniProtKB-UniRule"/>
</dbReference>
<dbReference type="CDD" id="cd00812">
    <property type="entry name" value="LeuRS_core"/>
    <property type="match status" value="1"/>
</dbReference>
<dbReference type="FunFam" id="3.40.50.620:FF:000003">
    <property type="entry name" value="Leucine--tRNA ligase"/>
    <property type="match status" value="1"/>
</dbReference>
<dbReference type="Gene3D" id="3.10.20.590">
    <property type="match status" value="1"/>
</dbReference>
<dbReference type="Gene3D" id="3.40.50.620">
    <property type="entry name" value="HUPs"/>
    <property type="match status" value="2"/>
</dbReference>
<dbReference type="Gene3D" id="1.10.730.10">
    <property type="entry name" value="Isoleucyl-tRNA Synthetase, Domain 1"/>
    <property type="match status" value="1"/>
</dbReference>
<dbReference type="HAMAP" id="MF_00049_B">
    <property type="entry name" value="Leu_tRNA_synth_B"/>
    <property type="match status" value="1"/>
</dbReference>
<dbReference type="InterPro" id="IPR001412">
    <property type="entry name" value="aa-tRNA-synth_I_CS"/>
</dbReference>
<dbReference type="InterPro" id="IPR002300">
    <property type="entry name" value="aa-tRNA-synth_Ia"/>
</dbReference>
<dbReference type="InterPro" id="IPR002302">
    <property type="entry name" value="Leu-tRNA-ligase"/>
</dbReference>
<dbReference type="InterPro" id="IPR025709">
    <property type="entry name" value="Leu_tRNA-synth_edit"/>
</dbReference>
<dbReference type="InterPro" id="IPR013155">
    <property type="entry name" value="M/V/L/I-tRNA-synth_anticd-bd"/>
</dbReference>
<dbReference type="InterPro" id="IPR015413">
    <property type="entry name" value="Methionyl/Leucyl_tRNA_Synth"/>
</dbReference>
<dbReference type="InterPro" id="IPR014729">
    <property type="entry name" value="Rossmann-like_a/b/a_fold"/>
</dbReference>
<dbReference type="InterPro" id="IPR009080">
    <property type="entry name" value="tRNAsynth_Ia_anticodon-bd"/>
</dbReference>
<dbReference type="InterPro" id="IPR009008">
    <property type="entry name" value="Val/Leu/Ile-tRNA-synth_edit"/>
</dbReference>
<dbReference type="NCBIfam" id="TIGR00396">
    <property type="entry name" value="leuS_bact"/>
    <property type="match status" value="1"/>
</dbReference>
<dbReference type="PANTHER" id="PTHR43740:SF2">
    <property type="entry name" value="LEUCINE--TRNA LIGASE, MITOCHONDRIAL"/>
    <property type="match status" value="1"/>
</dbReference>
<dbReference type="PANTHER" id="PTHR43740">
    <property type="entry name" value="LEUCYL-TRNA SYNTHETASE"/>
    <property type="match status" value="1"/>
</dbReference>
<dbReference type="Pfam" id="PF08264">
    <property type="entry name" value="Anticodon_1"/>
    <property type="match status" value="1"/>
</dbReference>
<dbReference type="Pfam" id="PF00133">
    <property type="entry name" value="tRNA-synt_1"/>
    <property type="match status" value="1"/>
</dbReference>
<dbReference type="Pfam" id="PF13603">
    <property type="entry name" value="tRNA-synt_1_2"/>
    <property type="match status" value="1"/>
</dbReference>
<dbReference type="Pfam" id="PF09334">
    <property type="entry name" value="tRNA-synt_1g"/>
    <property type="match status" value="1"/>
</dbReference>
<dbReference type="PRINTS" id="PR00985">
    <property type="entry name" value="TRNASYNTHLEU"/>
</dbReference>
<dbReference type="SUPFAM" id="SSF47323">
    <property type="entry name" value="Anticodon-binding domain of a subclass of class I aminoacyl-tRNA synthetases"/>
    <property type="match status" value="1"/>
</dbReference>
<dbReference type="SUPFAM" id="SSF52374">
    <property type="entry name" value="Nucleotidylyl transferase"/>
    <property type="match status" value="1"/>
</dbReference>
<dbReference type="SUPFAM" id="SSF50677">
    <property type="entry name" value="ValRS/IleRS/LeuRS editing domain"/>
    <property type="match status" value="1"/>
</dbReference>
<dbReference type="PROSITE" id="PS00178">
    <property type="entry name" value="AA_TRNA_LIGASE_I"/>
    <property type="match status" value="1"/>
</dbReference>
<gene>
    <name evidence="1" type="primary">leuS</name>
    <name type="ordered locus">TW385</name>
</gene>
<reference key="1">
    <citation type="journal article" date="2003" name="Lancet">
        <title>Sequencing and analysis of the genome of the Whipple's disease bacterium Tropheryma whipplei.</title>
        <authorList>
            <person name="Bentley S.D."/>
            <person name="Maiwald M."/>
            <person name="Murphy L.D."/>
            <person name="Pallen M.J."/>
            <person name="Yeats C.A."/>
            <person name="Dover L.G."/>
            <person name="Norbertczak H.T."/>
            <person name="Besra G.S."/>
            <person name="Quail M.A."/>
            <person name="Harris D.E."/>
            <person name="von Herbay A."/>
            <person name="Goble A."/>
            <person name="Rutter S."/>
            <person name="Squares R."/>
            <person name="Squares S."/>
            <person name="Barrell B.G."/>
            <person name="Parkhill J."/>
            <person name="Relman D.A."/>
        </authorList>
    </citation>
    <scope>NUCLEOTIDE SEQUENCE [LARGE SCALE GENOMIC DNA]</scope>
    <source>
        <strain>TW08/27</strain>
    </source>
</reference>